<organism>
    <name type="scientific">Aspergillus fumigatus (strain ATCC MYA-4609 / CBS 101355 / FGSC A1100 / Af293)</name>
    <name type="common">Neosartorya fumigata</name>
    <dbReference type="NCBI Taxonomy" id="330879"/>
    <lineage>
        <taxon>Eukaryota</taxon>
        <taxon>Fungi</taxon>
        <taxon>Dikarya</taxon>
        <taxon>Ascomycota</taxon>
        <taxon>Pezizomycotina</taxon>
        <taxon>Eurotiomycetes</taxon>
        <taxon>Eurotiomycetidae</taxon>
        <taxon>Eurotiales</taxon>
        <taxon>Aspergillaceae</taxon>
        <taxon>Aspergillus</taxon>
        <taxon>Aspergillus subgen. Fumigati</taxon>
    </lineage>
</organism>
<accession>Q4WSE8</accession>
<accession>Q6MYI6</accession>
<accession>Q8TFW7</accession>
<evidence type="ECO:0000250" key="1"/>
<evidence type="ECO:0000255" key="2"/>
<evidence type="ECO:0000255" key="3">
    <source>
        <dbReference type="PROSITE-ProRule" id="PRU00077"/>
    </source>
</evidence>
<evidence type="ECO:0000255" key="4">
    <source>
        <dbReference type="PROSITE-ProRule" id="PRU00448"/>
    </source>
</evidence>
<evidence type="ECO:0000256" key="5">
    <source>
        <dbReference type="SAM" id="MobiDB-lite"/>
    </source>
</evidence>
<evidence type="ECO:0000305" key="6"/>
<comment type="function">
    <text evidence="1">Component of the PAN1 actin cytoskeleton-regulatory complex required for the internalization of endosomes during actin-coupled endocytosis. The complex links the site of endocytosis to the cell membrane-associated actin cytoskeleton. Mediates uptake of external molecules and vacuolar degradation of plasma membrane proteins. Plays a role in the proper organization of the cell membrane-associated actin cytoskeleton and promotes its destabilization (By similarity).</text>
</comment>
<comment type="subunit">
    <text evidence="1">Component of the PAN1 actin cytoskeleton-regulatory complex.</text>
</comment>
<comment type="subcellular location">
    <subcellularLocation>
        <location evidence="1">Cell membrane</location>
        <topology evidence="1">Peripheral membrane protein</topology>
        <orientation evidence="1">Cytoplasmic side</orientation>
    </subcellularLocation>
    <subcellularLocation>
        <location evidence="1">Endosome membrane</location>
        <topology evidence="1">Peripheral membrane protein</topology>
        <orientation evidence="1">Cytoplasmic side</orientation>
    </subcellularLocation>
    <subcellularLocation>
        <location evidence="1">Cytoplasm</location>
        <location evidence="1">Cytoskeleton</location>
        <location evidence="1">Actin patch</location>
    </subcellularLocation>
    <text evidence="1">Cytoplasmic and cortical actin patches.</text>
</comment>
<comment type="similarity">
    <text evidence="6">Belongs to the END3 family.</text>
</comment>
<comment type="sequence caution" evidence="6">
    <conflict type="erroneous gene model prediction">
        <sequence resource="EMBL-CDS" id="CAD28444"/>
    </conflict>
</comment>
<comment type="sequence caution" evidence="6">
    <conflict type="erroneous gene model prediction">
        <sequence resource="EMBL-CDS" id="CAF32017"/>
    </conflict>
</comment>
<feature type="chain" id="PRO_0000349438" description="Actin cytoskeleton-regulatory complex protein end3">
    <location>
        <begin position="1"/>
        <end position="404"/>
    </location>
</feature>
<feature type="domain" description="EH 1" evidence="3">
    <location>
        <begin position="10"/>
        <end position="100"/>
    </location>
</feature>
<feature type="domain" description="EF-hand" evidence="4">
    <location>
        <begin position="42"/>
        <end position="77"/>
    </location>
</feature>
<feature type="domain" description="EH 2" evidence="3">
    <location>
        <begin position="139"/>
        <end position="227"/>
    </location>
</feature>
<feature type="region of interest" description="Disordered" evidence="5">
    <location>
        <begin position="306"/>
        <end position="327"/>
    </location>
</feature>
<feature type="coiled-coil region" evidence="2">
    <location>
        <begin position="281"/>
        <end position="404"/>
    </location>
</feature>
<feature type="compositionally biased region" description="Basic and acidic residues" evidence="5">
    <location>
        <begin position="313"/>
        <end position="324"/>
    </location>
</feature>
<feature type="binding site" evidence="4">
    <location>
        <position position="55"/>
    </location>
    <ligand>
        <name>Ca(2+)</name>
        <dbReference type="ChEBI" id="CHEBI:29108"/>
    </ligand>
</feature>
<feature type="binding site" evidence="4">
    <location>
        <position position="57"/>
    </location>
    <ligand>
        <name>Ca(2+)</name>
        <dbReference type="ChEBI" id="CHEBI:29108"/>
    </ligand>
</feature>
<feature type="binding site" evidence="4">
    <location>
        <position position="59"/>
    </location>
    <ligand>
        <name>Ca(2+)</name>
        <dbReference type="ChEBI" id="CHEBI:29108"/>
    </ligand>
</feature>
<feature type="binding site" evidence="4">
    <location>
        <position position="61"/>
    </location>
    <ligand>
        <name>Ca(2+)</name>
        <dbReference type="ChEBI" id="CHEBI:29108"/>
    </ligand>
</feature>
<feature type="binding site" evidence="4">
    <location>
        <position position="66"/>
    </location>
    <ligand>
        <name>Ca(2+)</name>
        <dbReference type="ChEBI" id="CHEBI:29108"/>
    </ligand>
</feature>
<keyword id="KW-0009">Actin-binding</keyword>
<keyword id="KW-0106">Calcium</keyword>
<keyword id="KW-1003">Cell membrane</keyword>
<keyword id="KW-0175">Coiled coil</keyword>
<keyword id="KW-0963">Cytoplasm</keyword>
<keyword id="KW-0206">Cytoskeleton</keyword>
<keyword id="KW-0254">Endocytosis</keyword>
<keyword id="KW-0967">Endosome</keyword>
<keyword id="KW-0472">Membrane</keyword>
<keyword id="KW-0479">Metal-binding</keyword>
<keyword id="KW-1185">Reference proteome</keyword>
<keyword id="KW-0677">Repeat</keyword>
<sequence>MSNKKIEQWEIERYWEIFSSLANGHPRLNSSQAASVLRNSRLSDDQLEKVWDLADVDSDGELDFEEFCVAMRLVFDLVNGELQAVPRVLPDWLIPETKAHLVQAGRALSDRPEQFERIEDEDDTPGLKDGFDWYMKPSDKSKYEEIYSANRNHRGEITFESLQALYDSLDVPDTDIRSAWNLVNPSASPAINKDATLAFLHILNYRHEGFRIPRTIPASLRASFENNKIDYQIDNARPAQRWGADGDTETPTGRKAKFGDTYLSRLGVGGKGSYTPKGTDFSDTIQDEEWEKVRLRRELSELQAKLEAANKASESRRDRPRNDGRPNWTLIKKEALQLLEYKERELRELREGTGRAKAGQDLERLREDIRTVGEQVEGLKSHLAQRKEVLADLRSQIEEERARR</sequence>
<name>END3_ASPFU</name>
<gene>
    <name type="primary">end3</name>
    <name type="synonym">sagA</name>
    <name type="ORF">AFUA_1G13020</name>
</gene>
<dbReference type="EMBL" id="AL713629">
    <property type="protein sequence ID" value="CAD28444.1"/>
    <property type="status" value="ALT_SEQ"/>
    <property type="molecule type" value="Genomic_DNA"/>
</dbReference>
<dbReference type="EMBL" id="BX649606">
    <property type="protein sequence ID" value="CAF32017.1"/>
    <property type="status" value="ALT_SEQ"/>
    <property type="molecule type" value="Genomic_DNA"/>
</dbReference>
<dbReference type="EMBL" id="AAHF01000004">
    <property type="protein sequence ID" value="EAL90634.1"/>
    <property type="molecule type" value="Genomic_DNA"/>
</dbReference>
<dbReference type="RefSeq" id="XP_752672.1">
    <property type="nucleotide sequence ID" value="XM_747579.1"/>
</dbReference>
<dbReference type="FunCoup" id="Q4WSE8">
    <property type="interactions" value="97"/>
</dbReference>
<dbReference type="STRING" id="330879.Q4WSE8"/>
<dbReference type="EnsemblFungi" id="EAL90634">
    <property type="protein sequence ID" value="EAL90634"/>
    <property type="gene ID" value="AFUA_1G13020"/>
</dbReference>
<dbReference type="GeneID" id="3510253"/>
<dbReference type="KEGG" id="afm:AFUA_1G13020"/>
<dbReference type="VEuPathDB" id="FungiDB:Afu1g13020"/>
<dbReference type="eggNOG" id="KOG0998">
    <property type="taxonomic scope" value="Eukaryota"/>
</dbReference>
<dbReference type="HOGENOM" id="CLU_040829_0_0_1"/>
<dbReference type="InParanoid" id="Q4WSE8"/>
<dbReference type="OMA" id="DWLIPES"/>
<dbReference type="OrthoDB" id="1716625at2759"/>
<dbReference type="Proteomes" id="UP000002530">
    <property type="component" value="Chromosome 1"/>
</dbReference>
<dbReference type="GO" id="GO:0030479">
    <property type="term" value="C:actin cortical patch"/>
    <property type="evidence" value="ECO:0007669"/>
    <property type="project" value="UniProtKB-SubCell"/>
</dbReference>
<dbReference type="GO" id="GO:0005737">
    <property type="term" value="C:cytoplasm"/>
    <property type="evidence" value="ECO:0000318"/>
    <property type="project" value="GO_Central"/>
</dbReference>
<dbReference type="GO" id="GO:0010008">
    <property type="term" value="C:endosome membrane"/>
    <property type="evidence" value="ECO:0007669"/>
    <property type="project" value="UniProtKB-SubCell"/>
</dbReference>
<dbReference type="GO" id="GO:0005886">
    <property type="term" value="C:plasma membrane"/>
    <property type="evidence" value="ECO:0000318"/>
    <property type="project" value="GO_Central"/>
</dbReference>
<dbReference type="GO" id="GO:0003779">
    <property type="term" value="F:actin binding"/>
    <property type="evidence" value="ECO:0007669"/>
    <property type="project" value="UniProtKB-KW"/>
</dbReference>
<dbReference type="GO" id="GO:0005509">
    <property type="term" value="F:calcium ion binding"/>
    <property type="evidence" value="ECO:0007669"/>
    <property type="project" value="InterPro"/>
</dbReference>
<dbReference type="GO" id="GO:0007015">
    <property type="term" value="P:actin filament organization"/>
    <property type="evidence" value="ECO:0007669"/>
    <property type="project" value="InterPro"/>
</dbReference>
<dbReference type="GO" id="GO:0006897">
    <property type="term" value="P:endocytosis"/>
    <property type="evidence" value="ECO:0000318"/>
    <property type="project" value="GO_Central"/>
</dbReference>
<dbReference type="GO" id="GO:0016197">
    <property type="term" value="P:endosomal transport"/>
    <property type="evidence" value="ECO:0000318"/>
    <property type="project" value="GO_Central"/>
</dbReference>
<dbReference type="CDD" id="cd00052">
    <property type="entry name" value="EH"/>
    <property type="match status" value="1"/>
</dbReference>
<dbReference type="FunFam" id="1.10.238.10:FF:000339">
    <property type="entry name" value="Actin cytoskeleton-regulatory complex protein END3"/>
    <property type="match status" value="1"/>
</dbReference>
<dbReference type="FunFam" id="1.10.238.10:FF:000323">
    <property type="entry name" value="Actin cytoskeleton-regulatory complex protein end3"/>
    <property type="match status" value="1"/>
</dbReference>
<dbReference type="Gene3D" id="1.10.238.10">
    <property type="entry name" value="EF-hand"/>
    <property type="match status" value="2"/>
</dbReference>
<dbReference type="InterPro" id="IPR011992">
    <property type="entry name" value="EF-hand-dom_pair"/>
</dbReference>
<dbReference type="InterPro" id="IPR018247">
    <property type="entry name" value="EF_Hand_1_Ca_BS"/>
</dbReference>
<dbReference type="InterPro" id="IPR002048">
    <property type="entry name" value="EF_hand_dom"/>
</dbReference>
<dbReference type="InterPro" id="IPR000261">
    <property type="entry name" value="EH_dom"/>
</dbReference>
<dbReference type="InterPro" id="IPR025604">
    <property type="entry name" value="End3"/>
</dbReference>
<dbReference type="PANTHER" id="PTHR11216">
    <property type="entry name" value="EH DOMAIN"/>
    <property type="match status" value="1"/>
</dbReference>
<dbReference type="Pfam" id="PF12763">
    <property type="entry name" value="EH"/>
    <property type="match status" value="1"/>
</dbReference>
<dbReference type="Pfam" id="PF12761">
    <property type="entry name" value="End3"/>
    <property type="match status" value="1"/>
</dbReference>
<dbReference type="SMART" id="SM00054">
    <property type="entry name" value="EFh"/>
    <property type="match status" value="1"/>
</dbReference>
<dbReference type="SMART" id="SM00027">
    <property type="entry name" value="EH"/>
    <property type="match status" value="2"/>
</dbReference>
<dbReference type="SUPFAM" id="SSF47473">
    <property type="entry name" value="EF-hand"/>
    <property type="match status" value="2"/>
</dbReference>
<dbReference type="PROSITE" id="PS00018">
    <property type="entry name" value="EF_HAND_1"/>
    <property type="match status" value="1"/>
</dbReference>
<dbReference type="PROSITE" id="PS50222">
    <property type="entry name" value="EF_HAND_2"/>
    <property type="match status" value="1"/>
</dbReference>
<dbReference type="PROSITE" id="PS50031">
    <property type="entry name" value="EH"/>
    <property type="match status" value="2"/>
</dbReference>
<protein>
    <recommendedName>
        <fullName>Actin cytoskeleton-regulatory complex protein end3</fullName>
    </recommendedName>
    <alternativeName>
        <fullName>Cytoskeletal adapter protein sagA</fullName>
    </alternativeName>
    <alternativeName>
        <fullName>Endocytosis protein 3</fullName>
    </alternativeName>
</protein>
<reference key="1">
    <citation type="journal article" date="2004" name="Fungal Genet. Biol.">
        <title>Insight into the genome of Aspergillus fumigatus: analysis of a 922 kb region encompassing the nitrate assimilation gene cluster.</title>
        <authorList>
            <person name="Pain A."/>
            <person name="Woodward J.R."/>
            <person name="Quail M.A."/>
            <person name="Anderson M.J."/>
            <person name="Clark R."/>
            <person name="Collins M."/>
            <person name="Fosker N."/>
            <person name="Fraser A."/>
            <person name="Harris D.E."/>
            <person name="Larke N."/>
            <person name="Murphy L.D."/>
            <person name="Humphray S."/>
            <person name="O'Neil S."/>
            <person name="Pertea M."/>
            <person name="Price C."/>
            <person name="Rabbinowitsch E."/>
            <person name="Rajandream M.A."/>
            <person name="Salzberg S.L."/>
            <person name="Saunders D."/>
            <person name="Seeger K."/>
            <person name="Sharp S."/>
            <person name="Warren T."/>
            <person name="Denning D.W."/>
            <person name="Barrell B.G."/>
            <person name="Hall N."/>
        </authorList>
    </citation>
    <scope>NUCLEOTIDE SEQUENCE [GENOMIC DNA]</scope>
</reference>
<reference key="2">
    <citation type="journal article" date="2005" name="Nature">
        <title>Genomic sequence of the pathogenic and allergenic filamentous fungus Aspergillus fumigatus.</title>
        <authorList>
            <person name="Nierman W.C."/>
            <person name="Pain A."/>
            <person name="Anderson M.J."/>
            <person name="Wortman J.R."/>
            <person name="Kim H.S."/>
            <person name="Arroyo J."/>
            <person name="Berriman M."/>
            <person name="Abe K."/>
            <person name="Archer D.B."/>
            <person name="Bermejo C."/>
            <person name="Bennett J.W."/>
            <person name="Bowyer P."/>
            <person name="Chen D."/>
            <person name="Collins M."/>
            <person name="Coulsen R."/>
            <person name="Davies R."/>
            <person name="Dyer P.S."/>
            <person name="Farman M.L."/>
            <person name="Fedorova N."/>
            <person name="Fedorova N.D."/>
            <person name="Feldblyum T.V."/>
            <person name="Fischer R."/>
            <person name="Fosker N."/>
            <person name="Fraser A."/>
            <person name="Garcia J.L."/>
            <person name="Garcia M.J."/>
            <person name="Goble A."/>
            <person name="Goldman G.H."/>
            <person name="Gomi K."/>
            <person name="Griffith-Jones S."/>
            <person name="Gwilliam R."/>
            <person name="Haas B.J."/>
            <person name="Haas H."/>
            <person name="Harris D.E."/>
            <person name="Horiuchi H."/>
            <person name="Huang J."/>
            <person name="Humphray S."/>
            <person name="Jimenez J."/>
            <person name="Keller N."/>
            <person name="Khouri H."/>
            <person name="Kitamoto K."/>
            <person name="Kobayashi T."/>
            <person name="Konzack S."/>
            <person name="Kulkarni R."/>
            <person name="Kumagai T."/>
            <person name="Lafton A."/>
            <person name="Latge J.-P."/>
            <person name="Li W."/>
            <person name="Lord A."/>
            <person name="Lu C."/>
            <person name="Majoros W.H."/>
            <person name="May G.S."/>
            <person name="Miller B.L."/>
            <person name="Mohamoud Y."/>
            <person name="Molina M."/>
            <person name="Monod M."/>
            <person name="Mouyna I."/>
            <person name="Mulligan S."/>
            <person name="Murphy L.D."/>
            <person name="O'Neil S."/>
            <person name="Paulsen I."/>
            <person name="Penalva M.A."/>
            <person name="Pertea M."/>
            <person name="Price C."/>
            <person name="Pritchard B.L."/>
            <person name="Quail M.A."/>
            <person name="Rabbinowitsch E."/>
            <person name="Rawlins N."/>
            <person name="Rajandream M.A."/>
            <person name="Reichard U."/>
            <person name="Renauld H."/>
            <person name="Robson G.D."/>
            <person name="Rodriguez de Cordoba S."/>
            <person name="Rodriguez-Pena J.M."/>
            <person name="Ronning C.M."/>
            <person name="Rutter S."/>
            <person name="Salzberg S.L."/>
            <person name="Sanchez M."/>
            <person name="Sanchez-Ferrero J.C."/>
            <person name="Saunders D."/>
            <person name="Seeger K."/>
            <person name="Squares R."/>
            <person name="Squares S."/>
            <person name="Takeuchi M."/>
            <person name="Tekaia F."/>
            <person name="Turner G."/>
            <person name="Vazquez de Aldana C.R."/>
            <person name="Weidman J."/>
            <person name="White O."/>
            <person name="Woodward J.R."/>
            <person name="Yu J.-H."/>
            <person name="Fraser C.M."/>
            <person name="Galagan J.E."/>
            <person name="Asai K."/>
            <person name="Machida M."/>
            <person name="Hall N."/>
            <person name="Barrell B.G."/>
            <person name="Denning D.W."/>
        </authorList>
    </citation>
    <scope>NUCLEOTIDE SEQUENCE [LARGE SCALE GENOMIC DNA]</scope>
    <source>
        <strain>ATCC MYA-4609 / CBS 101355 / FGSC A1100 / Af293</strain>
    </source>
</reference>
<proteinExistence type="inferred from homology"/>